<sequence>MADENSTGPGNQPEATLAPEATNAEVTSQAPRRGRGGGGRDGGRGGRDGGRGRRDDRRPRDEDGGEELIEKLVHINRVSKTVKGGKRFGFAALVVVGDGKGRAGFGHGKAREVPEAISKATAAAKKAMIRVPLRDGRTLHHDGRGHFGAGNVTLRSAPAGTGIIAGGPMRAVFESLGVADVVTKSVGTSNPYNMIRATFEALGEQTSPKSVAQRRGKKVSDLIKRGGASDRAAEAEAAAVTE</sequence>
<evidence type="ECO:0000255" key="1">
    <source>
        <dbReference type="HAMAP-Rule" id="MF_01307"/>
    </source>
</evidence>
<evidence type="ECO:0000256" key="2">
    <source>
        <dbReference type="SAM" id="MobiDB-lite"/>
    </source>
</evidence>
<evidence type="ECO:0000305" key="3"/>
<comment type="function">
    <text evidence="1">With S4 and S12 plays an important role in translational accuracy.</text>
</comment>
<comment type="function">
    <text evidence="1">Located at the back of the 30S subunit body where it stabilizes the conformation of the head with respect to the body.</text>
</comment>
<comment type="subunit">
    <text evidence="1">Part of the 30S ribosomal subunit. Contacts proteins S4 and S8.</text>
</comment>
<comment type="domain">
    <text>The N-terminal domain interacts with the head of the 30S subunit; the C-terminal domain interacts with the body and contacts protein S4. The interaction surface between S4 and S5 is involved in control of translational fidelity.</text>
</comment>
<comment type="similarity">
    <text evidence="1">Belongs to the universal ribosomal protein uS5 family.</text>
</comment>
<feature type="chain" id="PRO_0000323204" description="Small ribosomal subunit protein uS5">
    <location>
        <begin position="1"/>
        <end position="242"/>
    </location>
</feature>
<feature type="domain" description="S5 DRBM" evidence="1">
    <location>
        <begin position="68"/>
        <end position="131"/>
    </location>
</feature>
<feature type="region of interest" description="Disordered" evidence="2">
    <location>
        <begin position="1"/>
        <end position="65"/>
    </location>
</feature>
<feature type="region of interest" description="Disordered" evidence="2">
    <location>
        <begin position="204"/>
        <end position="242"/>
    </location>
</feature>
<feature type="compositionally biased region" description="Polar residues" evidence="2">
    <location>
        <begin position="1"/>
        <end position="14"/>
    </location>
</feature>
<feature type="compositionally biased region" description="Basic and acidic residues" evidence="2">
    <location>
        <begin position="41"/>
        <end position="65"/>
    </location>
</feature>
<feature type="compositionally biased region" description="Basic and acidic residues" evidence="2">
    <location>
        <begin position="218"/>
        <end position="234"/>
    </location>
</feature>
<accession>Q1GPB6</accession>
<protein>
    <recommendedName>
        <fullName evidence="1">Small ribosomal subunit protein uS5</fullName>
    </recommendedName>
    <alternativeName>
        <fullName evidence="3">30S ribosomal protein S5</fullName>
    </alternativeName>
</protein>
<reference key="1">
    <citation type="journal article" date="2009" name="Proc. Natl. Acad. Sci. U.S.A.">
        <title>The genomic basis of trophic strategy in marine bacteria.</title>
        <authorList>
            <person name="Lauro F.M."/>
            <person name="McDougald D."/>
            <person name="Thomas T."/>
            <person name="Williams T.J."/>
            <person name="Egan S."/>
            <person name="Rice S."/>
            <person name="DeMaere M.Z."/>
            <person name="Ting L."/>
            <person name="Ertan H."/>
            <person name="Johnson J."/>
            <person name="Ferriera S."/>
            <person name="Lapidus A."/>
            <person name="Anderson I."/>
            <person name="Kyrpides N."/>
            <person name="Munk A.C."/>
            <person name="Detter C."/>
            <person name="Han C.S."/>
            <person name="Brown M.V."/>
            <person name="Robb F.T."/>
            <person name="Kjelleberg S."/>
            <person name="Cavicchioli R."/>
        </authorList>
    </citation>
    <scope>NUCLEOTIDE SEQUENCE [LARGE SCALE GENOMIC DNA]</scope>
    <source>
        <strain>DSM 13593 / LMG 18877 / RB2256</strain>
    </source>
</reference>
<keyword id="KW-1185">Reference proteome</keyword>
<keyword id="KW-0687">Ribonucleoprotein</keyword>
<keyword id="KW-0689">Ribosomal protein</keyword>
<keyword id="KW-0694">RNA-binding</keyword>
<keyword id="KW-0699">rRNA-binding</keyword>
<dbReference type="EMBL" id="CP000356">
    <property type="protein sequence ID" value="ABF54506.1"/>
    <property type="molecule type" value="Genomic_DNA"/>
</dbReference>
<dbReference type="RefSeq" id="WP_011543071.1">
    <property type="nucleotide sequence ID" value="NC_008048.1"/>
</dbReference>
<dbReference type="SMR" id="Q1GPB6"/>
<dbReference type="STRING" id="317655.Sala_2801"/>
<dbReference type="KEGG" id="sal:Sala_2801"/>
<dbReference type="eggNOG" id="COG0098">
    <property type="taxonomic scope" value="Bacteria"/>
</dbReference>
<dbReference type="HOGENOM" id="CLU_065898_2_1_5"/>
<dbReference type="OrthoDB" id="9809045at2"/>
<dbReference type="Proteomes" id="UP000006578">
    <property type="component" value="Chromosome"/>
</dbReference>
<dbReference type="GO" id="GO:0015935">
    <property type="term" value="C:small ribosomal subunit"/>
    <property type="evidence" value="ECO:0007669"/>
    <property type="project" value="InterPro"/>
</dbReference>
<dbReference type="GO" id="GO:0019843">
    <property type="term" value="F:rRNA binding"/>
    <property type="evidence" value="ECO:0007669"/>
    <property type="project" value="UniProtKB-UniRule"/>
</dbReference>
<dbReference type="GO" id="GO:0003735">
    <property type="term" value="F:structural constituent of ribosome"/>
    <property type="evidence" value="ECO:0007669"/>
    <property type="project" value="InterPro"/>
</dbReference>
<dbReference type="GO" id="GO:0006412">
    <property type="term" value="P:translation"/>
    <property type="evidence" value="ECO:0007669"/>
    <property type="project" value="UniProtKB-UniRule"/>
</dbReference>
<dbReference type="FunFam" id="3.30.160.20:FF:000001">
    <property type="entry name" value="30S ribosomal protein S5"/>
    <property type="match status" value="1"/>
</dbReference>
<dbReference type="FunFam" id="3.30.230.10:FF:000002">
    <property type="entry name" value="30S ribosomal protein S5"/>
    <property type="match status" value="1"/>
</dbReference>
<dbReference type="Gene3D" id="3.30.160.20">
    <property type="match status" value="1"/>
</dbReference>
<dbReference type="Gene3D" id="3.30.230.10">
    <property type="match status" value="1"/>
</dbReference>
<dbReference type="HAMAP" id="MF_01307_B">
    <property type="entry name" value="Ribosomal_uS5_B"/>
    <property type="match status" value="1"/>
</dbReference>
<dbReference type="InterPro" id="IPR020568">
    <property type="entry name" value="Ribosomal_Su5_D2-typ_SF"/>
</dbReference>
<dbReference type="InterPro" id="IPR000851">
    <property type="entry name" value="Ribosomal_uS5"/>
</dbReference>
<dbReference type="InterPro" id="IPR005712">
    <property type="entry name" value="Ribosomal_uS5_bac-type"/>
</dbReference>
<dbReference type="InterPro" id="IPR005324">
    <property type="entry name" value="Ribosomal_uS5_C"/>
</dbReference>
<dbReference type="InterPro" id="IPR013810">
    <property type="entry name" value="Ribosomal_uS5_N"/>
</dbReference>
<dbReference type="InterPro" id="IPR018192">
    <property type="entry name" value="Ribosomal_uS5_N_CS"/>
</dbReference>
<dbReference type="InterPro" id="IPR014721">
    <property type="entry name" value="Ribsml_uS5_D2-typ_fold_subgr"/>
</dbReference>
<dbReference type="NCBIfam" id="TIGR01021">
    <property type="entry name" value="rpsE_bact"/>
    <property type="match status" value="1"/>
</dbReference>
<dbReference type="PANTHER" id="PTHR48277">
    <property type="entry name" value="MITOCHONDRIAL RIBOSOMAL PROTEIN S5"/>
    <property type="match status" value="1"/>
</dbReference>
<dbReference type="PANTHER" id="PTHR48277:SF1">
    <property type="entry name" value="MITOCHONDRIAL RIBOSOMAL PROTEIN S5"/>
    <property type="match status" value="1"/>
</dbReference>
<dbReference type="Pfam" id="PF00333">
    <property type="entry name" value="Ribosomal_S5"/>
    <property type="match status" value="1"/>
</dbReference>
<dbReference type="Pfam" id="PF03719">
    <property type="entry name" value="Ribosomal_S5_C"/>
    <property type="match status" value="1"/>
</dbReference>
<dbReference type="SUPFAM" id="SSF54768">
    <property type="entry name" value="dsRNA-binding domain-like"/>
    <property type="match status" value="1"/>
</dbReference>
<dbReference type="SUPFAM" id="SSF54211">
    <property type="entry name" value="Ribosomal protein S5 domain 2-like"/>
    <property type="match status" value="1"/>
</dbReference>
<dbReference type="PROSITE" id="PS00585">
    <property type="entry name" value="RIBOSOMAL_S5"/>
    <property type="match status" value="1"/>
</dbReference>
<dbReference type="PROSITE" id="PS50881">
    <property type="entry name" value="S5_DSRBD"/>
    <property type="match status" value="1"/>
</dbReference>
<proteinExistence type="inferred from homology"/>
<gene>
    <name evidence="1" type="primary">rpsE</name>
    <name type="ordered locus">Sala_2801</name>
</gene>
<organism>
    <name type="scientific">Sphingopyxis alaskensis (strain DSM 13593 / LMG 18877 / RB2256)</name>
    <name type="common">Sphingomonas alaskensis</name>
    <dbReference type="NCBI Taxonomy" id="317655"/>
    <lineage>
        <taxon>Bacteria</taxon>
        <taxon>Pseudomonadati</taxon>
        <taxon>Pseudomonadota</taxon>
        <taxon>Alphaproteobacteria</taxon>
        <taxon>Sphingomonadales</taxon>
        <taxon>Sphingomonadaceae</taxon>
        <taxon>Sphingopyxis</taxon>
    </lineage>
</organism>
<name>RS5_SPHAL</name>